<accession>D7KCH2</accession>
<protein>
    <recommendedName>
        <fullName>CASP-like protein 1C2</fullName>
        <shortName>AlCASPL1C2</shortName>
    </recommendedName>
</protein>
<reference key="1">
    <citation type="journal article" date="2011" name="Nat. Genet.">
        <title>The Arabidopsis lyrata genome sequence and the basis of rapid genome size change.</title>
        <authorList>
            <person name="Hu T.T."/>
            <person name="Pattyn P."/>
            <person name="Bakker E.G."/>
            <person name="Cao J."/>
            <person name="Cheng J.-F."/>
            <person name="Clark R.M."/>
            <person name="Fahlgren N."/>
            <person name="Fawcett J.A."/>
            <person name="Grimwood J."/>
            <person name="Gundlach H."/>
            <person name="Haberer G."/>
            <person name="Hollister J.D."/>
            <person name="Ossowski S."/>
            <person name="Ottilar R.P."/>
            <person name="Salamov A.A."/>
            <person name="Schneeberger K."/>
            <person name="Spannagl M."/>
            <person name="Wang X."/>
            <person name="Yang L."/>
            <person name="Nasrallah M.E."/>
            <person name="Bergelson J."/>
            <person name="Carrington J.C."/>
            <person name="Gaut B.S."/>
            <person name="Schmutz J."/>
            <person name="Mayer K.F.X."/>
            <person name="Van de Peer Y."/>
            <person name="Grigoriev I.V."/>
            <person name="Nordborg M."/>
            <person name="Weigel D."/>
            <person name="Guo Y.-L."/>
        </authorList>
    </citation>
    <scope>NUCLEOTIDE SEQUENCE [LARGE SCALE GENOMIC DNA]</scope>
    <source>
        <strain>cv. MN47</strain>
    </source>
</reference>
<reference key="2">
    <citation type="journal article" date="2014" name="Plant Physiol.">
        <title>Functional and evolutionary analysis of the CASPARIAN STRIP MEMBRANE DOMAIN PROTEIN family.</title>
        <authorList>
            <person name="Roppolo D."/>
            <person name="Boeckmann B."/>
            <person name="Pfister A."/>
            <person name="Boutet E."/>
            <person name="Rubio M.C."/>
            <person name="Denervaud-Tendon V."/>
            <person name="Vermeer J.E."/>
            <person name="Gheyselinck J."/>
            <person name="Xenarios I."/>
            <person name="Geldner N."/>
        </authorList>
    </citation>
    <scope>GENE FAMILY</scope>
    <scope>NOMENCLATURE</scope>
</reference>
<keyword id="KW-1003">Cell membrane</keyword>
<keyword id="KW-0472">Membrane</keyword>
<keyword id="KW-1185">Reference proteome</keyword>
<keyword id="KW-0812">Transmembrane</keyword>
<keyword id="KW-1133">Transmembrane helix</keyword>
<organism>
    <name type="scientific">Arabidopsis lyrata subsp. lyrata</name>
    <name type="common">Lyre-leaved rock-cress</name>
    <dbReference type="NCBI Taxonomy" id="81972"/>
    <lineage>
        <taxon>Eukaryota</taxon>
        <taxon>Viridiplantae</taxon>
        <taxon>Streptophyta</taxon>
        <taxon>Embryophyta</taxon>
        <taxon>Tracheophyta</taxon>
        <taxon>Spermatophyta</taxon>
        <taxon>Magnoliopsida</taxon>
        <taxon>eudicotyledons</taxon>
        <taxon>Gunneridae</taxon>
        <taxon>Pentapetalae</taxon>
        <taxon>rosids</taxon>
        <taxon>malvids</taxon>
        <taxon>Brassicales</taxon>
        <taxon>Brassicaceae</taxon>
        <taxon>Camelineae</taxon>
        <taxon>Arabidopsis</taxon>
    </lineage>
</organism>
<sequence length="164" mass="17859">MVKLTQRLGGLVLRFAAFCAALGAVIAMITSRERSSFFVISLVAKYSDLAAFKYFVIANAIVTVYSFLVLFLPKESLLWKFVVVLDLMVTMLLTSSLSAAVAVAQVGKRGNANAGWLPICGQVPRFCDQITGALIAGLVALVLYVFLLIFSIHHVVDPFLLRKS</sequence>
<dbReference type="EMBL" id="GL348713">
    <property type="protein sequence ID" value="EFH65726.1"/>
    <property type="molecule type" value="Genomic_DNA"/>
</dbReference>
<dbReference type="RefSeq" id="XP_002889467.1">
    <property type="nucleotide sequence ID" value="XM_002889421.1"/>
</dbReference>
<dbReference type="STRING" id="81972.D7KCH2"/>
<dbReference type="EnsemblPlants" id="fgenesh2_kg.1__295__AT1G03700.1">
    <property type="protein sequence ID" value="fgenesh2_kg.1__295__AT1G03700.1"/>
    <property type="gene ID" value="fgenesh2_kg.1__295__AT1G03700.1"/>
</dbReference>
<dbReference type="Gramene" id="fgenesh2_kg.1__295__AT1G03700.1">
    <property type="protein sequence ID" value="fgenesh2_kg.1__295__AT1G03700.1"/>
    <property type="gene ID" value="fgenesh2_kg.1__295__AT1G03700.1"/>
</dbReference>
<dbReference type="eggNOG" id="ENOG502RZXX">
    <property type="taxonomic scope" value="Eukaryota"/>
</dbReference>
<dbReference type="HOGENOM" id="CLU_066104_3_0_1"/>
<dbReference type="OrthoDB" id="1906221at2759"/>
<dbReference type="Proteomes" id="UP000008694">
    <property type="component" value="Unassembled WGS sequence"/>
</dbReference>
<dbReference type="GO" id="GO:0005886">
    <property type="term" value="C:plasma membrane"/>
    <property type="evidence" value="ECO:0007669"/>
    <property type="project" value="UniProtKB-SubCell"/>
</dbReference>
<dbReference type="InterPro" id="IPR006459">
    <property type="entry name" value="CASP/CASPL"/>
</dbReference>
<dbReference type="InterPro" id="IPR006702">
    <property type="entry name" value="CASP_dom"/>
</dbReference>
<dbReference type="InterPro" id="IPR044173">
    <property type="entry name" value="CASPL"/>
</dbReference>
<dbReference type="NCBIfam" id="TIGR01569">
    <property type="entry name" value="A_tha_TIGR01569"/>
    <property type="match status" value="1"/>
</dbReference>
<dbReference type="PANTHER" id="PTHR36488">
    <property type="entry name" value="CASP-LIKE PROTEIN 1U1"/>
    <property type="match status" value="1"/>
</dbReference>
<dbReference type="PANTHER" id="PTHR36488:SF8">
    <property type="entry name" value="CASP-LIKE PROTEIN 1U1"/>
    <property type="match status" value="1"/>
</dbReference>
<dbReference type="Pfam" id="PF04535">
    <property type="entry name" value="CASP_dom"/>
    <property type="match status" value="1"/>
</dbReference>
<feature type="chain" id="PRO_0000412013" description="CASP-like protein 1C2">
    <location>
        <begin position="1"/>
        <end position="164"/>
    </location>
</feature>
<feature type="topological domain" description="Cytoplasmic" evidence="2">
    <location>
        <begin position="1"/>
        <end position="8"/>
    </location>
</feature>
<feature type="transmembrane region" description="Helical" evidence="2">
    <location>
        <begin position="9"/>
        <end position="29"/>
    </location>
</feature>
<feature type="topological domain" description="Extracellular" evidence="2">
    <location>
        <begin position="30"/>
        <end position="51"/>
    </location>
</feature>
<feature type="transmembrane region" description="Helical" evidence="2">
    <location>
        <begin position="52"/>
        <end position="72"/>
    </location>
</feature>
<feature type="topological domain" description="Cytoplasmic" evidence="2">
    <location>
        <begin position="73"/>
        <end position="80"/>
    </location>
</feature>
<feature type="transmembrane region" description="Helical" evidence="2">
    <location>
        <begin position="81"/>
        <end position="101"/>
    </location>
</feature>
<feature type="topological domain" description="Extracellular" evidence="2">
    <location>
        <begin position="102"/>
        <end position="129"/>
    </location>
</feature>
<feature type="transmembrane region" description="Helical" evidence="2">
    <location>
        <begin position="130"/>
        <end position="150"/>
    </location>
</feature>
<feature type="topological domain" description="Cytoplasmic" evidence="2">
    <location>
        <begin position="151"/>
        <end position="164"/>
    </location>
</feature>
<proteinExistence type="inferred from homology"/>
<comment type="subunit">
    <text evidence="1">Homodimer and heterodimers.</text>
</comment>
<comment type="subcellular location">
    <subcellularLocation>
        <location evidence="1">Cell membrane</location>
        <topology evidence="1">Multi-pass membrane protein</topology>
    </subcellularLocation>
</comment>
<comment type="similarity">
    <text evidence="3">Belongs to the Casparian strip membrane proteins (CASP) family.</text>
</comment>
<name>CSPLE_ARALL</name>
<gene>
    <name type="ORF">ARALYDRAFT_470341</name>
</gene>
<evidence type="ECO:0000250" key="1"/>
<evidence type="ECO:0000255" key="2"/>
<evidence type="ECO:0000305" key="3"/>